<accession>A8GJ47</accession>
<sequence>MINDVISPEFDENGRAMRRIRSFVRRQGRLTKGQQHALDNYWPVMGVEYQAEPVDITALFGRDAPTVLEIGFGMGASLVTMAGHNPQQNFLGIEVHSPGVGACLADATEAELSNLRVMCHDAVEVLENMIPDGSLDMVQLFFPDPWHKARHNKRRIVQTPFVELVRRKLKVGGVFHMATDWQPYAEHMLEVMNGISGYRNLSSDNDYVPRPDSRPLTKFELRGQRLGHGVWDLMFERKE</sequence>
<protein>
    <recommendedName>
        <fullName evidence="2">tRNA (guanine-N(7)-)-methyltransferase</fullName>
        <ecNumber evidence="2">2.1.1.33</ecNumber>
    </recommendedName>
    <alternativeName>
        <fullName evidence="2">tRNA (guanine(46)-N(7))-methyltransferase</fullName>
    </alternativeName>
    <alternativeName>
        <fullName evidence="2">tRNA(m7G46)-methyltransferase</fullName>
    </alternativeName>
</protein>
<keyword id="KW-0489">Methyltransferase</keyword>
<keyword id="KW-0949">S-adenosyl-L-methionine</keyword>
<keyword id="KW-0808">Transferase</keyword>
<keyword id="KW-0819">tRNA processing</keyword>
<name>TRMB_SERP5</name>
<gene>
    <name evidence="2" type="primary">trmB</name>
    <name type="ordered locus">Spro_4042</name>
</gene>
<feature type="chain" id="PRO_1000064407" description="tRNA (guanine-N(7)-)-methyltransferase">
    <location>
        <begin position="1"/>
        <end position="239"/>
    </location>
</feature>
<feature type="region of interest" description="Interaction with RNA" evidence="2">
    <location>
        <begin position="150"/>
        <end position="155"/>
    </location>
</feature>
<feature type="active site" evidence="1">
    <location>
        <position position="144"/>
    </location>
</feature>
<feature type="binding site" evidence="2">
    <location>
        <position position="69"/>
    </location>
    <ligand>
        <name>S-adenosyl-L-methionine</name>
        <dbReference type="ChEBI" id="CHEBI:59789"/>
    </ligand>
</feature>
<feature type="binding site" evidence="2">
    <location>
        <position position="94"/>
    </location>
    <ligand>
        <name>S-adenosyl-L-methionine</name>
        <dbReference type="ChEBI" id="CHEBI:59789"/>
    </ligand>
</feature>
<feature type="binding site" evidence="2">
    <location>
        <position position="121"/>
    </location>
    <ligand>
        <name>S-adenosyl-L-methionine</name>
        <dbReference type="ChEBI" id="CHEBI:59789"/>
    </ligand>
</feature>
<feature type="binding site" evidence="2">
    <location>
        <position position="144"/>
    </location>
    <ligand>
        <name>S-adenosyl-L-methionine</name>
        <dbReference type="ChEBI" id="CHEBI:59789"/>
    </ligand>
</feature>
<feature type="binding site" evidence="2">
    <location>
        <position position="148"/>
    </location>
    <ligand>
        <name>substrate</name>
    </ligand>
</feature>
<feature type="binding site" evidence="2">
    <location>
        <position position="180"/>
    </location>
    <ligand>
        <name>substrate</name>
    </ligand>
</feature>
<feature type="binding site" evidence="2">
    <location>
        <begin position="217"/>
        <end position="220"/>
    </location>
    <ligand>
        <name>substrate</name>
    </ligand>
</feature>
<reference key="1">
    <citation type="submission" date="2007-09" db="EMBL/GenBank/DDBJ databases">
        <title>Complete sequence of chromosome of Serratia proteamaculans 568.</title>
        <authorList>
            <consortium name="US DOE Joint Genome Institute"/>
            <person name="Copeland A."/>
            <person name="Lucas S."/>
            <person name="Lapidus A."/>
            <person name="Barry K."/>
            <person name="Glavina del Rio T."/>
            <person name="Dalin E."/>
            <person name="Tice H."/>
            <person name="Pitluck S."/>
            <person name="Chain P."/>
            <person name="Malfatti S."/>
            <person name="Shin M."/>
            <person name="Vergez L."/>
            <person name="Schmutz J."/>
            <person name="Larimer F."/>
            <person name="Land M."/>
            <person name="Hauser L."/>
            <person name="Kyrpides N."/>
            <person name="Kim E."/>
            <person name="Taghavi S."/>
            <person name="Newman L."/>
            <person name="Vangronsveld J."/>
            <person name="van der Lelie D."/>
            <person name="Richardson P."/>
        </authorList>
    </citation>
    <scope>NUCLEOTIDE SEQUENCE [LARGE SCALE GENOMIC DNA]</scope>
    <source>
        <strain>568</strain>
    </source>
</reference>
<evidence type="ECO:0000250" key="1"/>
<evidence type="ECO:0000255" key="2">
    <source>
        <dbReference type="HAMAP-Rule" id="MF_01057"/>
    </source>
</evidence>
<organism>
    <name type="scientific">Serratia proteamaculans (strain 568)</name>
    <dbReference type="NCBI Taxonomy" id="399741"/>
    <lineage>
        <taxon>Bacteria</taxon>
        <taxon>Pseudomonadati</taxon>
        <taxon>Pseudomonadota</taxon>
        <taxon>Gammaproteobacteria</taxon>
        <taxon>Enterobacterales</taxon>
        <taxon>Yersiniaceae</taxon>
        <taxon>Serratia</taxon>
    </lineage>
</organism>
<comment type="function">
    <text evidence="2">Catalyzes the formation of N(7)-methylguanine at position 46 (m7G46) in tRNA.</text>
</comment>
<comment type="catalytic activity">
    <reaction evidence="2">
        <text>guanosine(46) in tRNA + S-adenosyl-L-methionine = N(7)-methylguanosine(46) in tRNA + S-adenosyl-L-homocysteine</text>
        <dbReference type="Rhea" id="RHEA:42708"/>
        <dbReference type="Rhea" id="RHEA-COMP:10188"/>
        <dbReference type="Rhea" id="RHEA-COMP:10189"/>
        <dbReference type="ChEBI" id="CHEBI:57856"/>
        <dbReference type="ChEBI" id="CHEBI:59789"/>
        <dbReference type="ChEBI" id="CHEBI:74269"/>
        <dbReference type="ChEBI" id="CHEBI:74480"/>
        <dbReference type="EC" id="2.1.1.33"/>
    </reaction>
</comment>
<comment type="pathway">
    <text evidence="2">tRNA modification; N(7)-methylguanine-tRNA biosynthesis.</text>
</comment>
<comment type="subunit">
    <text evidence="2">Monomer.</text>
</comment>
<comment type="similarity">
    <text evidence="2">Belongs to the class I-like SAM-binding methyltransferase superfamily. TrmB family.</text>
</comment>
<dbReference type="EC" id="2.1.1.33" evidence="2"/>
<dbReference type="EMBL" id="CP000826">
    <property type="protein sequence ID" value="ABV43137.1"/>
    <property type="molecule type" value="Genomic_DNA"/>
</dbReference>
<dbReference type="SMR" id="A8GJ47"/>
<dbReference type="STRING" id="399741.Spro_4042"/>
<dbReference type="KEGG" id="spe:Spro_4042"/>
<dbReference type="eggNOG" id="COG0220">
    <property type="taxonomic scope" value="Bacteria"/>
</dbReference>
<dbReference type="HOGENOM" id="CLU_050910_0_1_6"/>
<dbReference type="OrthoDB" id="9802090at2"/>
<dbReference type="UniPathway" id="UPA00989"/>
<dbReference type="GO" id="GO:0043527">
    <property type="term" value="C:tRNA methyltransferase complex"/>
    <property type="evidence" value="ECO:0007669"/>
    <property type="project" value="TreeGrafter"/>
</dbReference>
<dbReference type="GO" id="GO:0008176">
    <property type="term" value="F:tRNA (guanine(46)-N7)-methyltransferase activity"/>
    <property type="evidence" value="ECO:0007669"/>
    <property type="project" value="UniProtKB-UniRule"/>
</dbReference>
<dbReference type="CDD" id="cd02440">
    <property type="entry name" value="AdoMet_MTases"/>
    <property type="match status" value="1"/>
</dbReference>
<dbReference type="FunFam" id="3.40.50.150:FF:000024">
    <property type="entry name" value="tRNA (guanine-N(7)-)-methyltransferase"/>
    <property type="match status" value="1"/>
</dbReference>
<dbReference type="Gene3D" id="3.40.50.150">
    <property type="entry name" value="Vaccinia Virus protein VP39"/>
    <property type="match status" value="1"/>
</dbReference>
<dbReference type="HAMAP" id="MF_01057">
    <property type="entry name" value="tRNA_methyltr_TrmB"/>
    <property type="match status" value="1"/>
</dbReference>
<dbReference type="InterPro" id="IPR029063">
    <property type="entry name" value="SAM-dependent_MTases_sf"/>
</dbReference>
<dbReference type="InterPro" id="IPR003358">
    <property type="entry name" value="tRNA_(Gua-N-7)_MeTrfase_Trmb"/>
</dbReference>
<dbReference type="InterPro" id="IPR055361">
    <property type="entry name" value="tRNA_methyltr_TrmB_bact"/>
</dbReference>
<dbReference type="NCBIfam" id="TIGR00091">
    <property type="entry name" value="tRNA (guanosine(46)-N7)-methyltransferase TrmB"/>
    <property type="match status" value="1"/>
</dbReference>
<dbReference type="PANTHER" id="PTHR23417">
    <property type="entry name" value="3-DEOXY-D-MANNO-OCTULOSONIC-ACID TRANSFERASE/TRNA GUANINE-N 7 - -METHYLTRANSFERASE"/>
    <property type="match status" value="1"/>
</dbReference>
<dbReference type="PANTHER" id="PTHR23417:SF14">
    <property type="entry name" value="PENTACOTRIPEPTIDE-REPEAT REGION OF PRORP DOMAIN-CONTAINING PROTEIN"/>
    <property type="match status" value="1"/>
</dbReference>
<dbReference type="Pfam" id="PF02390">
    <property type="entry name" value="Methyltransf_4"/>
    <property type="match status" value="1"/>
</dbReference>
<dbReference type="SUPFAM" id="SSF53335">
    <property type="entry name" value="S-adenosyl-L-methionine-dependent methyltransferases"/>
    <property type="match status" value="1"/>
</dbReference>
<dbReference type="PROSITE" id="PS51625">
    <property type="entry name" value="SAM_MT_TRMB"/>
    <property type="match status" value="1"/>
</dbReference>
<proteinExistence type="inferred from homology"/>